<evidence type="ECO:0000255" key="1">
    <source>
        <dbReference type="HAMAP-Rule" id="MF_02126"/>
    </source>
</evidence>
<organism>
    <name type="scientific">Salmonella typhimurium (strain LT2 / SGSC1412 / ATCC 700720)</name>
    <dbReference type="NCBI Taxonomy" id="99287"/>
    <lineage>
        <taxon>Bacteria</taxon>
        <taxon>Pseudomonadati</taxon>
        <taxon>Pseudomonadota</taxon>
        <taxon>Gammaproteobacteria</taxon>
        <taxon>Enterobacterales</taxon>
        <taxon>Enterobacteriaceae</taxon>
        <taxon>Salmonella</taxon>
    </lineage>
</organism>
<comment type="function">
    <text evidence="1">Methylates the class 1 translation termination release factors RF1/PrfA and RF2/PrfB on the glutamine residue of the universally conserved GGQ motif.</text>
</comment>
<comment type="catalytic activity">
    <reaction evidence="1">
        <text>L-glutaminyl-[peptide chain release factor] + S-adenosyl-L-methionine = N(5)-methyl-L-glutaminyl-[peptide chain release factor] + S-adenosyl-L-homocysteine + H(+)</text>
        <dbReference type="Rhea" id="RHEA:42896"/>
        <dbReference type="Rhea" id="RHEA-COMP:10271"/>
        <dbReference type="Rhea" id="RHEA-COMP:10272"/>
        <dbReference type="ChEBI" id="CHEBI:15378"/>
        <dbReference type="ChEBI" id="CHEBI:30011"/>
        <dbReference type="ChEBI" id="CHEBI:57856"/>
        <dbReference type="ChEBI" id="CHEBI:59789"/>
        <dbReference type="ChEBI" id="CHEBI:61891"/>
        <dbReference type="EC" id="2.1.1.297"/>
    </reaction>
</comment>
<comment type="similarity">
    <text evidence="1">Belongs to the protein N5-glutamine methyltransferase family. PrmC subfamily.</text>
</comment>
<reference key="1">
    <citation type="journal article" date="2001" name="Nature">
        <title>Complete genome sequence of Salmonella enterica serovar Typhimurium LT2.</title>
        <authorList>
            <person name="McClelland M."/>
            <person name="Sanderson K.E."/>
            <person name="Spieth J."/>
            <person name="Clifton S.W."/>
            <person name="Latreille P."/>
            <person name="Courtney L."/>
            <person name="Porwollik S."/>
            <person name="Ali J."/>
            <person name="Dante M."/>
            <person name="Du F."/>
            <person name="Hou S."/>
            <person name="Layman D."/>
            <person name="Leonard S."/>
            <person name="Nguyen C."/>
            <person name="Scott K."/>
            <person name="Holmes A."/>
            <person name="Grewal N."/>
            <person name="Mulvaney E."/>
            <person name="Ryan E."/>
            <person name="Sun H."/>
            <person name="Florea L."/>
            <person name="Miller W."/>
            <person name="Stoneking T."/>
            <person name="Nhan M."/>
            <person name="Waterston R."/>
            <person name="Wilson R.K."/>
        </authorList>
    </citation>
    <scope>NUCLEOTIDE SEQUENCE [LARGE SCALE GENOMIC DNA]</scope>
    <source>
        <strain>LT2 / SGSC1412 / ATCC 700720</strain>
    </source>
</reference>
<reference key="2">
    <citation type="journal article" date="1989" name="J. Bacteriol.">
        <title>Cloning, genetic characterization, and nucleotide sequence of the hemA-prfA operon of Salmonella typhimurium.</title>
        <authorList>
            <person name="Elliott T."/>
        </authorList>
    </citation>
    <scope>NUCLEOTIDE SEQUENCE [GENOMIC DNA] OF 1-77</scope>
</reference>
<proteinExistence type="inferred from homology"/>
<name>PRMC_SALTY</name>
<keyword id="KW-0489">Methyltransferase</keyword>
<keyword id="KW-1185">Reference proteome</keyword>
<keyword id="KW-0949">S-adenosyl-L-methionine</keyword>
<keyword id="KW-0808">Transferase</keyword>
<protein>
    <recommendedName>
        <fullName evidence="1">Release factor glutamine methyltransferase</fullName>
        <shortName evidence="1">RF MTase</shortName>
        <ecNumber evidence="1">2.1.1.297</ecNumber>
    </recommendedName>
    <alternativeName>
        <fullName evidence="1">N5-glutamine methyltransferase PrmC</fullName>
    </alternativeName>
    <alternativeName>
        <fullName evidence="1">Protein-(glutamine-N5) MTase PrmC</fullName>
    </alternativeName>
    <alternativeName>
        <fullName evidence="1">Protein-glutamine N-methyltransferase PrmC</fullName>
    </alternativeName>
</protein>
<gene>
    <name evidence="1" type="primary">prmC</name>
    <name type="synonym">hemK</name>
    <name type="ordered locus">STM1775</name>
</gene>
<sequence>MDFQHWLHEAVNQLRDSDSPRRDAEILLEYVTGKGRTYIMAFGETPLTDVQQQQLADLLQRRKQGEPIAYLTGLREFWSLPLFVSPATLIPRPDTECLVEQALARLPVKTCRILDLGTGTGAIALALACERPDCEVTAVDRMPDAVALAIRNAEHLAIRNVRILQSCWFSALSGQQFDMIVSNPPYIDAQDPHLSEGDVRFEPRSALVADENGMADLTHIIDNARQMLTPGGFLLLEHGWQQGEAVRAVFRRSGYSDVETCRDYGGNERVTCGRFTP</sequence>
<feature type="chain" id="PRO_0000157157" description="Release factor glutamine methyltransferase">
    <location>
        <begin position="1"/>
        <end position="277"/>
    </location>
</feature>
<feature type="binding site" evidence="1">
    <location>
        <begin position="117"/>
        <end position="121"/>
    </location>
    <ligand>
        <name>S-adenosyl-L-methionine</name>
        <dbReference type="ChEBI" id="CHEBI:59789"/>
    </ligand>
</feature>
<feature type="binding site" evidence="1">
    <location>
        <position position="140"/>
    </location>
    <ligand>
        <name>S-adenosyl-L-methionine</name>
        <dbReference type="ChEBI" id="CHEBI:59789"/>
    </ligand>
</feature>
<feature type="binding site" evidence="1">
    <location>
        <position position="168"/>
    </location>
    <ligand>
        <name>S-adenosyl-L-methionine</name>
        <dbReference type="ChEBI" id="CHEBI:59789"/>
    </ligand>
</feature>
<feature type="binding site" evidence="1">
    <location>
        <begin position="183"/>
        <end position="186"/>
    </location>
    <ligand>
        <name>substrate</name>
    </ligand>
</feature>
<feature type="binding site" evidence="1">
    <location>
        <position position="183"/>
    </location>
    <ligand>
        <name>S-adenosyl-L-methionine</name>
        <dbReference type="ChEBI" id="CHEBI:59789"/>
    </ligand>
</feature>
<accession>P40816</accession>
<dbReference type="EC" id="2.1.1.297" evidence="1"/>
<dbReference type="EMBL" id="AE006468">
    <property type="protein sequence ID" value="AAL20690.1"/>
    <property type="molecule type" value="Genomic_DNA"/>
</dbReference>
<dbReference type="EMBL" id="J04243">
    <property type="protein sequence ID" value="AAA88612.1"/>
    <property type="molecule type" value="Genomic_DNA"/>
</dbReference>
<dbReference type="PIR" id="C32890">
    <property type="entry name" value="C32890"/>
</dbReference>
<dbReference type="RefSeq" id="NP_460731.1">
    <property type="nucleotide sequence ID" value="NC_003197.2"/>
</dbReference>
<dbReference type="RefSeq" id="WP_000347310.1">
    <property type="nucleotide sequence ID" value="NC_003197.2"/>
</dbReference>
<dbReference type="SMR" id="P40816"/>
<dbReference type="STRING" id="99287.STM1775"/>
<dbReference type="PaxDb" id="99287-STM1775"/>
<dbReference type="GeneID" id="1253294"/>
<dbReference type="KEGG" id="stm:STM1775"/>
<dbReference type="PATRIC" id="fig|99287.12.peg.1870"/>
<dbReference type="HOGENOM" id="CLU_018398_3_1_6"/>
<dbReference type="OMA" id="DFDARYW"/>
<dbReference type="PhylomeDB" id="P40816"/>
<dbReference type="BioCyc" id="SENT99287:STM1775-MONOMER"/>
<dbReference type="Proteomes" id="UP000001014">
    <property type="component" value="Chromosome"/>
</dbReference>
<dbReference type="GO" id="GO:0003676">
    <property type="term" value="F:nucleic acid binding"/>
    <property type="evidence" value="ECO:0007669"/>
    <property type="project" value="InterPro"/>
</dbReference>
<dbReference type="GO" id="GO:0102559">
    <property type="term" value="F:protein-(glutamine-N5) methyltransferase activity"/>
    <property type="evidence" value="ECO:0007669"/>
    <property type="project" value="UniProtKB-EC"/>
</dbReference>
<dbReference type="GO" id="GO:0036009">
    <property type="term" value="F:protein-glutamine N-methyltransferase activity"/>
    <property type="evidence" value="ECO:0000318"/>
    <property type="project" value="GO_Central"/>
</dbReference>
<dbReference type="GO" id="GO:0032259">
    <property type="term" value="P:methylation"/>
    <property type="evidence" value="ECO:0007669"/>
    <property type="project" value="UniProtKB-KW"/>
</dbReference>
<dbReference type="GO" id="GO:0006415">
    <property type="term" value="P:translational termination"/>
    <property type="evidence" value="ECO:0000318"/>
    <property type="project" value="GO_Central"/>
</dbReference>
<dbReference type="CDD" id="cd02440">
    <property type="entry name" value="AdoMet_MTases"/>
    <property type="match status" value="1"/>
</dbReference>
<dbReference type="FunFam" id="1.10.8.10:FF:000032">
    <property type="entry name" value="Release factor glutamine methyltransferase"/>
    <property type="match status" value="1"/>
</dbReference>
<dbReference type="FunFam" id="3.40.50.150:FF:000053">
    <property type="entry name" value="Release factor glutamine methyltransferase"/>
    <property type="match status" value="1"/>
</dbReference>
<dbReference type="Gene3D" id="1.10.8.10">
    <property type="entry name" value="DNA helicase RuvA subunit, C-terminal domain"/>
    <property type="match status" value="1"/>
</dbReference>
<dbReference type="Gene3D" id="3.40.50.150">
    <property type="entry name" value="Vaccinia Virus protein VP39"/>
    <property type="match status" value="1"/>
</dbReference>
<dbReference type="HAMAP" id="MF_02126">
    <property type="entry name" value="RF_methyltr_PrmC"/>
    <property type="match status" value="1"/>
</dbReference>
<dbReference type="InterPro" id="IPR002052">
    <property type="entry name" value="DNA_methylase_N6_adenine_CS"/>
</dbReference>
<dbReference type="InterPro" id="IPR004556">
    <property type="entry name" value="HemK-like"/>
</dbReference>
<dbReference type="InterPro" id="IPR025714">
    <property type="entry name" value="Methyltranfer_dom"/>
</dbReference>
<dbReference type="InterPro" id="IPR050320">
    <property type="entry name" value="N5-glutamine_MTase"/>
</dbReference>
<dbReference type="InterPro" id="IPR040758">
    <property type="entry name" value="PrmC_N"/>
</dbReference>
<dbReference type="InterPro" id="IPR019874">
    <property type="entry name" value="RF_methyltr_PrmC"/>
</dbReference>
<dbReference type="InterPro" id="IPR029063">
    <property type="entry name" value="SAM-dependent_MTases_sf"/>
</dbReference>
<dbReference type="NCBIfam" id="TIGR00536">
    <property type="entry name" value="hemK_fam"/>
    <property type="match status" value="1"/>
</dbReference>
<dbReference type="NCBIfam" id="TIGR03534">
    <property type="entry name" value="RF_mod_PrmC"/>
    <property type="match status" value="1"/>
</dbReference>
<dbReference type="PANTHER" id="PTHR18895">
    <property type="entry name" value="HEMK METHYLTRANSFERASE"/>
    <property type="match status" value="1"/>
</dbReference>
<dbReference type="PANTHER" id="PTHR18895:SF74">
    <property type="entry name" value="MTRF1L RELEASE FACTOR GLUTAMINE METHYLTRANSFERASE"/>
    <property type="match status" value="1"/>
</dbReference>
<dbReference type="Pfam" id="PF13847">
    <property type="entry name" value="Methyltransf_31"/>
    <property type="match status" value="1"/>
</dbReference>
<dbReference type="Pfam" id="PF17827">
    <property type="entry name" value="PrmC_N"/>
    <property type="match status" value="1"/>
</dbReference>
<dbReference type="SUPFAM" id="SSF53335">
    <property type="entry name" value="S-adenosyl-L-methionine-dependent methyltransferases"/>
    <property type="match status" value="1"/>
</dbReference>